<organism>
    <name type="scientific">Artibeus cinereus</name>
    <name type="common">Gervais's fruit-eating bat</name>
    <name type="synonym">Dermanura cinerea</name>
    <dbReference type="NCBI Taxonomy" id="40224"/>
    <lineage>
        <taxon>Eukaryota</taxon>
        <taxon>Metazoa</taxon>
        <taxon>Chordata</taxon>
        <taxon>Craniata</taxon>
        <taxon>Vertebrata</taxon>
        <taxon>Euteleostomi</taxon>
        <taxon>Mammalia</taxon>
        <taxon>Eutheria</taxon>
        <taxon>Laurasiatheria</taxon>
        <taxon>Chiroptera</taxon>
        <taxon>Yangochiroptera</taxon>
        <taxon>Phyllostomidae</taxon>
        <taxon>Stenodermatinae</taxon>
        <taxon>Artibeus</taxon>
    </lineage>
</organism>
<comment type="function">
    <text evidence="2">Component of the ubiquinol-cytochrome c reductase complex (complex III or cytochrome b-c1 complex) that is part of the mitochondrial respiratory chain. The b-c1 complex mediates electron transfer from ubiquinol to cytochrome c. Contributes to the generation of a proton gradient across the mitochondrial membrane that is then used for ATP synthesis.</text>
</comment>
<comment type="cofactor">
    <cofactor evidence="2">
        <name>heme b</name>
        <dbReference type="ChEBI" id="CHEBI:60344"/>
    </cofactor>
    <text evidence="2">Binds 2 heme b groups non-covalently.</text>
</comment>
<comment type="subunit">
    <text evidence="2">The cytochrome bc1 complex contains 11 subunits: 3 respiratory subunits (MT-CYB, CYC1 and UQCRFS1), 2 core proteins (UQCRC1 and UQCRC2) and 6 low-molecular weight proteins (UQCRH/QCR6, UQCRB/QCR7, UQCRQ/QCR8, UQCR10/QCR9, UQCR11/QCR10 and a cleavage product of UQCRFS1). This cytochrome bc1 complex then forms a dimer.</text>
</comment>
<comment type="subcellular location">
    <subcellularLocation>
        <location evidence="2">Mitochondrion inner membrane</location>
        <topology evidence="2">Multi-pass membrane protein</topology>
    </subcellularLocation>
</comment>
<comment type="miscellaneous">
    <text evidence="1">Heme 1 (or BL or b562) is low-potential and absorbs at about 562 nm, and heme 2 (or BH or b566) is high-potential and absorbs at about 566 nm.</text>
</comment>
<comment type="similarity">
    <text evidence="3 4">Belongs to the cytochrome b family.</text>
</comment>
<comment type="caution">
    <text evidence="2">The full-length protein contains only eight transmembrane helices, not nine as predicted by bioinformatics tools.</text>
</comment>
<feature type="chain" id="PRO_0000060624" description="Cytochrome b">
    <location>
        <begin position="1"/>
        <end position="379"/>
    </location>
</feature>
<feature type="transmembrane region" description="Helical" evidence="2">
    <location>
        <begin position="33"/>
        <end position="53"/>
    </location>
</feature>
<feature type="transmembrane region" description="Helical" evidence="2">
    <location>
        <begin position="77"/>
        <end position="98"/>
    </location>
</feature>
<feature type="transmembrane region" description="Helical" evidence="2">
    <location>
        <begin position="113"/>
        <end position="133"/>
    </location>
</feature>
<feature type="transmembrane region" description="Helical" evidence="2">
    <location>
        <begin position="178"/>
        <end position="198"/>
    </location>
</feature>
<feature type="transmembrane region" description="Helical" evidence="2">
    <location>
        <begin position="226"/>
        <end position="246"/>
    </location>
</feature>
<feature type="transmembrane region" description="Helical" evidence="2">
    <location>
        <begin position="288"/>
        <end position="308"/>
    </location>
</feature>
<feature type="transmembrane region" description="Helical" evidence="2">
    <location>
        <begin position="320"/>
        <end position="340"/>
    </location>
</feature>
<feature type="transmembrane region" description="Helical" evidence="2">
    <location>
        <begin position="347"/>
        <end position="367"/>
    </location>
</feature>
<feature type="binding site" description="axial binding residue" evidence="2">
    <location>
        <position position="83"/>
    </location>
    <ligand>
        <name>heme b</name>
        <dbReference type="ChEBI" id="CHEBI:60344"/>
        <label>b562</label>
    </ligand>
    <ligandPart>
        <name>Fe</name>
        <dbReference type="ChEBI" id="CHEBI:18248"/>
    </ligandPart>
</feature>
<feature type="binding site" description="axial binding residue" evidence="2">
    <location>
        <position position="97"/>
    </location>
    <ligand>
        <name>heme b</name>
        <dbReference type="ChEBI" id="CHEBI:60344"/>
        <label>b566</label>
    </ligand>
    <ligandPart>
        <name>Fe</name>
        <dbReference type="ChEBI" id="CHEBI:18248"/>
    </ligandPart>
</feature>
<feature type="binding site" description="axial binding residue" evidence="2">
    <location>
        <position position="182"/>
    </location>
    <ligand>
        <name>heme b</name>
        <dbReference type="ChEBI" id="CHEBI:60344"/>
        <label>b562</label>
    </ligand>
    <ligandPart>
        <name>Fe</name>
        <dbReference type="ChEBI" id="CHEBI:18248"/>
    </ligandPart>
</feature>
<feature type="binding site" description="axial binding residue" evidence="2">
    <location>
        <position position="196"/>
    </location>
    <ligand>
        <name>heme b</name>
        <dbReference type="ChEBI" id="CHEBI:60344"/>
        <label>b566</label>
    </ligand>
    <ligandPart>
        <name>Fe</name>
        <dbReference type="ChEBI" id="CHEBI:18248"/>
    </ligandPart>
</feature>
<feature type="binding site" evidence="2">
    <location>
        <position position="201"/>
    </location>
    <ligand>
        <name>a ubiquinone</name>
        <dbReference type="ChEBI" id="CHEBI:16389"/>
    </ligand>
</feature>
<feature type="sequence conflict" description="In Ref. 2; AAA67850." evidence="5" ref="2">
    <original>I</original>
    <variation>V</variation>
    <location>
        <position position="14"/>
    </location>
</feature>
<gene>
    <name type="primary">MT-CYB</name>
    <name type="synonym">COB</name>
    <name type="synonym">CYTB</name>
    <name type="synonym">MTCYB</name>
</gene>
<name>CYB_ARTCI</name>
<keyword id="KW-0249">Electron transport</keyword>
<keyword id="KW-0349">Heme</keyword>
<keyword id="KW-0408">Iron</keyword>
<keyword id="KW-0472">Membrane</keyword>
<keyword id="KW-0479">Metal-binding</keyword>
<keyword id="KW-0496">Mitochondrion</keyword>
<keyword id="KW-0999">Mitochondrion inner membrane</keyword>
<keyword id="KW-0679">Respiratory chain</keyword>
<keyword id="KW-0812">Transmembrane</keyword>
<keyword id="KW-1133">Transmembrane helix</keyword>
<keyword id="KW-0813">Transport</keyword>
<keyword id="KW-0830">Ubiquinone</keyword>
<protein>
    <recommendedName>
        <fullName>Cytochrome b</fullName>
    </recommendedName>
    <alternativeName>
        <fullName>Complex III subunit 3</fullName>
    </alternativeName>
    <alternativeName>
        <fullName>Complex III subunit III</fullName>
    </alternativeName>
    <alternativeName>
        <fullName>Cytochrome b-c1 complex subunit 3</fullName>
    </alternativeName>
    <alternativeName>
        <fullName>Ubiquinol-cytochrome-c reductase complex cytochrome b subunit</fullName>
    </alternativeName>
</protein>
<evidence type="ECO:0000250" key="1"/>
<evidence type="ECO:0000250" key="2">
    <source>
        <dbReference type="UniProtKB" id="P00157"/>
    </source>
</evidence>
<evidence type="ECO:0000255" key="3">
    <source>
        <dbReference type="PROSITE-ProRule" id="PRU00967"/>
    </source>
</evidence>
<evidence type="ECO:0000255" key="4">
    <source>
        <dbReference type="PROSITE-ProRule" id="PRU00968"/>
    </source>
</evidence>
<evidence type="ECO:0000305" key="5"/>
<geneLocation type="mitochondrion"/>
<reference key="1">
    <citation type="submission" date="1996-08" db="EMBL/GenBank/DDBJ databases">
        <title>Phylogenetic accuracy, stability, and congruence: relationships within and among the New World bat genera Artibeus, Dermanura, and Koopmania.</title>
        <authorList>
            <person name="den Bussche R.A."/>
            <person name="Hudgeons J.L."/>
            <person name="Baker R.J."/>
        </authorList>
    </citation>
    <scope>NUCLEOTIDE SEQUENCE [GENOMIC DNA]</scope>
    <source>
        <strain>Isolate TK 18790 / AMNH 267197</strain>
    </source>
</reference>
<reference key="2">
    <citation type="journal article" date="1993" name="Mol. Biol. Evol.">
        <title>Molecular phylogenetics of Stenodermatini bat genera: congruence of data from nuclear and mitochondrial DNA.</title>
        <authorList>
            <person name="den Bussche R.A."/>
            <person name="Baker R.J."/>
            <person name="Wichman H.A."/>
            <person name="Hamilton M.J."/>
        </authorList>
    </citation>
    <scope>NUCLEOTIDE SEQUENCE [GENOMIC DNA] OF 1-134</scope>
    <source>
        <strain>Isolate TK 14594</strain>
        <tissue>Muscle</tissue>
    </source>
</reference>
<sequence length="379" mass="42698">MTNIRKTHPLLKIINSSFVDLPAPSSLSSWWNFGSLLGVCLGVQILTGLFLAMHYTSDTATAFNSVTHICRDVNYGWLLRYLHANGASMFFICLYLHVGRGLYYGSYTYSETWNIGILLLFAVMATAFMGYVLPWGQMSFWGATVITNLLSAIPYIGTDLVQWIWGGFSVDKANLTRFFAFHFLLPFIVTALVMVHLLFLHETGSNNPTGIPSDPDMIPFHPYYTIKDILGFLVMLTALATLVLFSPDLLGDPDNYIPANPSITPPHIKPEWYFLFAYAILRSIPNKLGGVLALVMSILILAIVPILHMSKQRSMMFRPLSQCLFWLLVAVLFTLTWIGGQPVEHPYIIIGQTASILYFLIILFLMPMTSVVENYLLKW</sequence>
<dbReference type="EMBL" id="U66511">
    <property type="protein sequence ID" value="AAB06766.1"/>
    <property type="molecule type" value="Genomic_DNA"/>
</dbReference>
<dbReference type="EMBL" id="L19511">
    <property type="protein sequence ID" value="AAA67850.1"/>
    <property type="molecule type" value="Genomic_DNA"/>
</dbReference>
<dbReference type="SMR" id="Q95726"/>
<dbReference type="GO" id="GO:0005743">
    <property type="term" value="C:mitochondrial inner membrane"/>
    <property type="evidence" value="ECO:0007669"/>
    <property type="project" value="UniProtKB-SubCell"/>
</dbReference>
<dbReference type="GO" id="GO:0045275">
    <property type="term" value="C:respiratory chain complex III"/>
    <property type="evidence" value="ECO:0007669"/>
    <property type="project" value="InterPro"/>
</dbReference>
<dbReference type="GO" id="GO:0046872">
    <property type="term" value="F:metal ion binding"/>
    <property type="evidence" value="ECO:0007669"/>
    <property type="project" value="UniProtKB-KW"/>
</dbReference>
<dbReference type="GO" id="GO:0008121">
    <property type="term" value="F:ubiquinol-cytochrome-c reductase activity"/>
    <property type="evidence" value="ECO:0007669"/>
    <property type="project" value="InterPro"/>
</dbReference>
<dbReference type="GO" id="GO:0006122">
    <property type="term" value="P:mitochondrial electron transport, ubiquinol to cytochrome c"/>
    <property type="evidence" value="ECO:0007669"/>
    <property type="project" value="TreeGrafter"/>
</dbReference>
<dbReference type="CDD" id="cd00290">
    <property type="entry name" value="cytochrome_b_C"/>
    <property type="match status" value="1"/>
</dbReference>
<dbReference type="CDD" id="cd00284">
    <property type="entry name" value="Cytochrome_b_N"/>
    <property type="match status" value="1"/>
</dbReference>
<dbReference type="FunFam" id="1.20.810.10:FF:000002">
    <property type="entry name" value="Cytochrome b"/>
    <property type="match status" value="1"/>
</dbReference>
<dbReference type="Gene3D" id="1.20.810.10">
    <property type="entry name" value="Cytochrome Bc1 Complex, Chain C"/>
    <property type="match status" value="1"/>
</dbReference>
<dbReference type="InterPro" id="IPR005798">
    <property type="entry name" value="Cyt_b/b6_C"/>
</dbReference>
<dbReference type="InterPro" id="IPR036150">
    <property type="entry name" value="Cyt_b/b6_C_sf"/>
</dbReference>
<dbReference type="InterPro" id="IPR005797">
    <property type="entry name" value="Cyt_b/b6_N"/>
</dbReference>
<dbReference type="InterPro" id="IPR027387">
    <property type="entry name" value="Cytb/b6-like_sf"/>
</dbReference>
<dbReference type="InterPro" id="IPR030689">
    <property type="entry name" value="Cytochrome_b"/>
</dbReference>
<dbReference type="InterPro" id="IPR048260">
    <property type="entry name" value="Cytochrome_b_C_euk/bac"/>
</dbReference>
<dbReference type="InterPro" id="IPR048259">
    <property type="entry name" value="Cytochrome_b_N_euk/bac"/>
</dbReference>
<dbReference type="InterPro" id="IPR016174">
    <property type="entry name" value="Di-haem_cyt_TM"/>
</dbReference>
<dbReference type="PANTHER" id="PTHR19271">
    <property type="entry name" value="CYTOCHROME B"/>
    <property type="match status" value="1"/>
</dbReference>
<dbReference type="PANTHER" id="PTHR19271:SF16">
    <property type="entry name" value="CYTOCHROME B"/>
    <property type="match status" value="1"/>
</dbReference>
<dbReference type="Pfam" id="PF00032">
    <property type="entry name" value="Cytochrom_B_C"/>
    <property type="match status" value="1"/>
</dbReference>
<dbReference type="Pfam" id="PF00033">
    <property type="entry name" value="Cytochrome_B"/>
    <property type="match status" value="1"/>
</dbReference>
<dbReference type="PIRSF" id="PIRSF038885">
    <property type="entry name" value="COB"/>
    <property type="match status" value="1"/>
</dbReference>
<dbReference type="SUPFAM" id="SSF81648">
    <property type="entry name" value="a domain/subunit of cytochrome bc1 complex (Ubiquinol-cytochrome c reductase)"/>
    <property type="match status" value="1"/>
</dbReference>
<dbReference type="SUPFAM" id="SSF81342">
    <property type="entry name" value="Transmembrane di-heme cytochromes"/>
    <property type="match status" value="1"/>
</dbReference>
<dbReference type="PROSITE" id="PS51003">
    <property type="entry name" value="CYTB_CTER"/>
    <property type="match status" value="1"/>
</dbReference>
<dbReference type="PROSITE" id="PS51002">
    <property type="entry name" value="CYTB_NTER"/>
    <property type="match status" value="1"/>
</dbReference>
<proteinExistence type="inferred from homology"/>
<accession>Q95726</accession>
<accession>Q34305</accession>